<keyword id="KW-0249">Electron transport</keyword>
<keyword id="KW-0349">Heme</keyword>
<keyword id="KW-0408">Iron</keyword>
<keyword id="KW-0472">Membrane</keyword>
<keyword id="KW-0479">Metal-binding</keyword>
<keyword id="KW-0496">Mitochondrion</keyword>
<keyword id="KW-0999">Mitochondrion inner membrane</keyword>
<keyword id="KW-0679">Respiratory chain</keyword>
<keyword id="KW-0812">Transmembrane</keyword>
<keyword id="KW-1133">Transmembrane helix</keyword>
<keyword id="KW-0813">Transport</keyword>
<keyword id="KW-0830">Ubiquinone</keyword>
<name>CYB_CERNA</name>
<proteinExistence type="inferred from homology"/>
<sequence length="154" mass="17481">IKDILGILLLVLFLMLLVLFAPDLLGDPDNYTPANPLNTPPHIKPEWYFLFAYAILRSIPNKLGGVLALVSSILILILMPLLHTSKQRSMMFRPFSQCLFWILVADLLTLTWIGGQPVEYPFIIIGQLASVLYFFIILVLMPITSTIENNLLKW</sequence>
<geneLocation type="mitochondrion"/>
<reference key="1">
    <citation type="journal article" date="1999" name="Mol. Phylogenet. Evol.">
        <title>A mitochondrial control region and cytochrome b phylogeny of sika deer (Cervus nippon) and report of tandem repeats in the control region.</title>
        <authorList>
            <person name="Cook C.E."/>
            <person name="Wang Y."/>
            <person name="Sensabaugh G."/>
        </authorList>
    </citation>
    <scope>NUCLEOTIDE SEQUENCE [GENOMIC DNA]</scope>
    <source>
        <tissue>Muscle</tissue>
    </source>
</reference>
<dbReference type="EMBL" id="AF129411">
    <property type="protein sequence ID" value="AAD31810.1"/>
    <property type="molecule type" value="Genomic_DNA"/>
</dbReference>
<dbReference type="SMR" id="P82049"/>
<dbReference type="GO" id="GO:0005743">
    <property type="term" value="C:mitochondrial inner membrane"/>
    <property type="evidence" value="ECO:0007669"/>
    <property type="project" value="UniProtKB-SubCell"/>
</dbReference>
<dbReference type="GO" id="GO:0046872">
    <property type="term" value="F:metal ion binding"/>
    <property type="evidence" value="ECO:0007669"/>
    <property type="project" value="UniProtKB-KW"/>
</dbReference>
<dbReference type="GO" id="GO:0008121">
    <property type="term" value="F:ubiquinol-cytochrome-c reductase activity"/>
    <property type="evidence" value="ECO:0007669"/>
    <property type="project" value="TreeGrafter"/>
</dbReference>
<dbReference type="GO" id="GO:0006122">
    <property type="term" value="P:mitochondrial electron transport, ubiquinol to cytochrome c"/>
    <property type="evidence" value="ECO:0007669"/>
    <property type="project" value="TreeGrafter"/>
</dbReference>
<dbReference type="CDD" id="cd00290">
    <property type="entry name" value="cytochrome_b_C"/>
    <property type="match status" value="1"/>
</dbReference>
<dbReference type="Gene3D" id="1.20.810.10">
    <property type="entry name" value="Cytochrome Bc1 Complex, Chain C"/>
    <property type="match status" value="1"/>
</dbReference>
<dbReference type="InterPro" id="IPR005798">
    <property type="entry name" value="Cyt_b/b6_C"/>
</dbReference>
<dbReference type="InterPro" id="IPR036150">
    <property type="entry name" value="Cyt_b/b6_C_sf"/>
</dbReference>
<dbReference type="InterPro" id="IPR027387">
    <property type="entry name" value="Cytb/b6-like_sf"/>
</dbReference>
<dbReference type="InterPro" id="IPR048260">
    <property type="entry name" value="Cytochrome_b_C_euk/bac"/>
</dbReference>
<dbReference type="PANTHER" id="PTHR19271">
    <property type="entry name" value="CYTOCHROME B"/>
    <property type="match status" value="1"/>
</dbReference>
<dbReference type="PANTHER" id="PTHR19271:SF16">
    <property type="entry name" value="CYTOCHROME B"/>
    <property type="match status" value="1"/>
</dbReference>
<dbReference type="Pfam" id="PF00032">
    <property type="entry name" value="Cytochrom_B_C"/>
    <property type="match status" value="1"/>
</dbReference>
<dbReference type="SUPFAM" id="SSF81648">
    <property type="entry name" value="a domain/subunit of cytochrome bc1 complex (Ubiquinol-cytochrome c reductase)"/>
    <property type="match status" value="1"/>
</dbReference>
<dbReference type="PROSITE" id="PS51003">
    <property type="entry name" value="CYTB_CTER"/>
    <property type="match status" value="1"/>
</dbReference>
<gene>
    <name type="primary">MT-CYB</name>
    <name type="synonym">COB</name>
    <name type="synonym">CYTB</name>
    <name type="synonym">MTCYB</name>
</gene>
<accession>P82049</accession>
<evidence type="ECO:0000250" key="1"/>
<evidence type="ECO:0000250" key="2">
    <source>
        <dbReference type="UniProtKB" id="P00157"/>
    </source>
</evidence>
<evidence type="ECO:0000255" key="3">
    <source>
        <dbReference type="PROSITE-ProRule" id="PRU00967"/>
    </source>
</evidence>
<protein>
    <recommendedName>
        <fullName>Cytochrome b</fullName>
    </recommendedName>
    <alternativeName>
        <fullName>Complex III subunit 3</fullName>
    </alternativeName>
    <alternativeName>
        <fullName>Complex III subunit III</fullName>
    </alternativeName>
    <alternativeName>
        <fullName>Cytochrome b-c1 complex subunit 3</fullName>
    </alternativeName>
    <alternativeName>
        <fullName>Ubiquinol-cytochrome-c reductase complex cytochrome b subunit</fullName>
    </alternativeName>
</protein>
<comment type="function">
    <text evidence="2">Component of the ubiquinol-cytochrome c reductase complex (complex III or cytochrome b-c1 complex) that is part of the mitochondrial respiratory chain. The b-c1 complex mediates electron transfer from ubiquinol to cytochrome c. Contributes to the generation of a proton gradient across the mitochondrial membrane that is then used for ATP synthesis.</text>
</comment>
<comment type="cofactor">
    <cofactor evidence="2">
        <name>heme</name>
        <dbReference type="ChEBI" id="CHEBI:30413"/>
    </cofactor>
    <text evidence="2">Binds 2 heme groups non-covalently.</text>
</comment>
<comment type="subunit">
    <text evidence="2">The cytochrome bc1 complex contains 11 subunits: 3 respiratory subunits (MT-CYB, CYC1 and UQCRFS1), 2 core proteins (UQCRC1 and UQCRC2) and 6 low-molecular weight proteins (UQCRH/QCR6, UQCRB/QCR7, UQCRQ/QCR8, UQCR10/QCR9, UQCR11/QCR10 and a cleavage product of UQCRFS1). This cytochrome bc1 complex then forms a dimer.</text>
</comment>
<comment type="subcellular location">
    <subcellularLocation>
        <location evidence="2">Mitochondrion inner membrane</location>
        <topology evidence="2">Multi-pass membrane protein</topology>
    </subcellularLocation>
</comment>
<comment type="miscellaneous">
    <text evidence="1">Heme 1 (or BL or b562) is low-potential and absorbs at about 562 nm, and heme 2 (or BH or b566) is high-potential and absorbs at about 566 nm.</text>
</comment>
<comment type="similarity">
    <text evidence="3">Belongs to the cytochrome b family.</text>
</comment>
<comment type="caution">
    <text evidence="2">The full-length protein contains only eight transmembrane helices, not nine as predicted by bioinformatics tools.</text>
</comment>
<feature type="chain" id="PRO_0000060760" description="Cytochrome b">
    <location>
        <begin position="1" status="less than"/>
        <end position="154"/>
    </location>
</feature>
<feature type="transmembrane region" description="Helical" evidence="2">
    <location>
        <begin position="1"/>
        <end position="21"/>
    </location>
</feature>
<feature type="transmembrane region" description="Helical" evidence="2">
    <location>
        <begin position="63"/>
        <end position="83"/>
    </location>
</feature>
<feature type="transmembrane region" description="Helical" evidence="2">
    <location>
        <begin position="95"/>
        <end position="115"/>
    </location>
</feature>
<feature type="transmembrane region" description="Helical" evidence="2">
    <location>
        <begin position="122"/>
        <end position="142"/>
    </location>
</feature>
<feature type="non-terminal residue">
    <location>
        <position position="1"/>
    </location>
</feature>
<organism>
    <name type="scientific">Cervus nippon aplodontus</name>
    <name type="common">Sika deer</name>
    <dbReference type="NCBI Taxonomy" id="92865"/>
    <lineage>
        <taxon>Eukaryota</taxon>
        <taxon>Metazoa</taxon>
        <taxon>Chordata</taxon>
        <taxon>Craniata</taxon>
        <taxon>Vertebrata</taxon>
        <taxon>Euteleostomi</taxon>
        <taxon>Mammalia</taxon>
        <taxon>Eutheria</taxon>
        <taxon>Laurasiatheria</taxon>
        <taxon>Artiodactyla</taxon>
        <taxon>Ruminantia</taxon>
        <taxon>Pecora</taxon>
        <taxon>Cervidae</taxon>
        <taxon>Cervinae</taxon>
        <taxon>Cervus</taxon>
    </lineage>
</organism>